<keyword id="KW-0143">Chaperone</keyword>
<keyword id="KW-0963">Cytoplasm</keyword>
<keyword id="KW-1185">Reference proteome</keyword>
<keyword id="KW-0346">Stress response</keyword>
<proteinExistence type="inferred from homology"/>
<feature type="chain" id="PRO_1000137549" description="Protein GrpE">
    <location>
        <begin position="1"/>
        <end position="181"/>
    </location>
</feature>
<feature type="region of interest" description="Disordered" evidence="2">
    <location>
        <begin position="1"/>
        <end position="39"/>
    </location>
</feature>
<feature type="compositionally biased region" description="Polar residues" evidence="2">
    <location>
        <begin position="1"/>
        <end position="20"/>
    </location>
</feature>
<feature type="compositionally biased region" description="Low complexity" evidence="2">
    <location>
        <begin position="21"/>
        <end position="39"/>
    </location>
</feature>
<evidence type="ECO:0000255" key="1">
    <source>
        <dbReference type="HAMAP-Rule" id="MF_01151"/>
    </source>
</evidence>
<evidence type="ECO:0000256" key="2">
    <source>
        <dbReference type="SAM" id="MobiDB-lite"/>
    </source>
</evidence>
<protein>
    <recommendedName>
        <fullName evidence="1">Protein GrpE</fullName>
    </recommendedName>
    <alternativeName>
        <fullName evidence="1">HSP-70 cofactor</fullName>
    </alternativeName>
</protein>
<reference key="1">
    <citation type="submission" date="2007-10" db="EMBL/GenBank/DDBJ databases">
        <title>Complete sequence of chromosome 1 of Burkholderia multivorans ATCC 17616.</title>
        <authorList>
            <person name="Copeland A."/>
            <person name="Lucas S."/>
            <person name="Lapidus A."/>
            <person name="Barry K."/>
            <person name="Glavina del Rio T."/>
            <person name="Dalin E."/>
            <person name="Tice H."/>
            <person name="Pitluck S."/>
            <person name="Chain P."/>
            <person name="Malfatti S."/>
            <person name="Shin M."/>
            <person name="Vergez L."/>
            <person name="Schmutz J."/>
            <person name="Larimer F."/>
            <person name="Land M."/>
            <person name="Hauser L."/>
            <person name="Kyrpides N."/>
            <person name="Kim E."/>
            <person name="Tiedje J."/>
            <person name="Richardson P."/>
        </authorList>
    </citation>
    <scope>NUCLEOTIDE SEQUENCE [LARGE SCALE GENOMIC DNA]</scope>
    <source>
        <strain>ATCC 17616 / 249</strain>
    </source>
</reference>
<reference key="2">
    <citation type="submission" date="2007-04" db="EMBL/GenBank/DDBJ databases">
        <title>Complete genome sequence of Burkholderia multivorans ATCC 17616.</title>
        <authorList>
            <person name="Ohtsubo Y."/>
            <person name="Yamashita A."/>
            <person name="Kurokawa K."/>
            <person name="Takami H."/>
            <person name="Yuhara S."/>
            <person name="Nishiyama E."/>
            <person name="Endo R."/>
            <person name="Miyazaki R."/>
            <person name="Ono A."/>
            <person name="Yano K."/>
            <person name="Ito M."/>
            <person name="Sota M."/>
            <person name="Yuji N."/>
            <person name="Hattori M."/>
            <person name="Tsuda M."/>
        </authorList>
    </citation>
    <scope>NUCLEOTIDE SEQUENCE [LARGE SCALE GENOMIC DNA]</scope>
    <source>
        <strain>ATCC 17616 / 249</strain>
    </source>
</reference>
<organism>
    <name type="scientific">Burkholderia multivorans (strain ATCC 17616 / 249)</name>
    <dbReference type="NCBI Taxonomy" id="395019"/>
    <lineage>
        <taxon>Bacteria</taxon>
        <taxon>Pseudomonadati</taxon>
        <taxon>Pseudomonadota</taxon>
        <taxon>Betaproteobacteria</taxon>
        <taxon>Burkholderiales</taxon>
        <taxon>Burkholderiaceae</taxon>
        <taxon>Burkholderia</taxon>
        <taxon>Burkholderia cepacia complex</taxon>
    </lineage>
</organism>
<dbReference type="EMBL" id="CP000868">
    <property type="protein sequence ID" value="ABX16319.1"/>
    <property type="molecule type" value="Genomic_DNA"/>
</dbReference>
<dbReference type="EMBL" id="AP009385">
    <property type="protein sequence ID" value="BAG42567.1"/>
    <property type="molecule type" value="Genomic_DNA"/>
</dbReference>
<dbReference type="RefSeq" id="WP_006401604.1">
    <property type="nucleotide sequence ID" value="NC_010804.1"/>
</dbReference>
<dbReference type="SMR" id="A9AGC0"/>
<dbReference type="STRING" id="395019.BMULJ_00603"/>
<dbReference type="GeneID" id="89569032"/>
<dbReference type="KEGG" id="bmj:BMULJ_00603"/>
<dbReference type="KEGG" id="bmu:Bmul_2635"/>
<dbReference type="eggNOG" id="COG0576">
    <property type="taxonomic scope" value="Bacteria"/>
</dbReference>
<dbReference type="HOGENOM" id="CLU_057217_6_1_4"/>
<dbReference type="Proteomes" id="UP000008815">
    <property type="component" value="Chromosome 1"/>
</dbReference>
<dbReference type="GO" id="GO:0005829">
    <property type="term" value="C:cytosol"/>
    <property type="evidence" value="ECO:0007669"/>
    <property type="project" value="TreeGrafter"/>
</dbReference>
<dbReference type="GO" id="GO:0000774">
    <property type="term" value="F:adenyl-nucleotide exchange factor activity"/>
    <property type="evidence" value="ECO:0007669"/>
    <property type="project" value="InterPro"/>
</dbReference>
<dbReference type="GO" id="GO:0042803">
    <property type="term" value="F:protein homodimerization activity"/>
    <property type="evidence" value="ECO:0007669"/>
    <property type="project" value="InterPro"/>
</dbReference>
<dbReference type="GO" id="GO:0051087">
    <property type="term" value="F:protein-folding chaperone binding"/>
    <property type="evidence" value="ECO:0007669"/>
    <property type="project" value="InterPro"/>
</dbReference>
<dbReference type="GO" id="GO:0051082">
    <property type="term" value="F:unfolded protein binding"/>
    <property type="evidence" value="ECO:0007669"/>
    <property type="project" value="TreeGrafter"/>
</dbReference>
<dbReference type="GO" id="GO:0006457">
    <property type="term" value="P:protein folding"/>
    <property type="evidence" value="ECO:0007669"/>
    <property type="project" value="InterPro"/>
</dbReference>
<dbReference type="CDD" id="cd00446">
    <property type="entry name" value="GrpE"/>
    <property type="match status" value="1"/>
</dbReference>
<dbReference type="FunFam" id="2.30.22.10:FF:000001">
    <property type="entry name" value="Protein GrpE"/>
    <property type="match status" value="1"/>
</dbReference>
<dbReference type="Gene3D" id="3.90.20.20">
    <property type="match status" value="1"/>
</dbReference>
<dbReference type="Gene3D" id="2.30.22.10">
    <property type="entry name" value="Head domain of nucleotide exchange factor GrpE"/>
    <property type="match status" value="1"/>
</dbReference>
<dbReference type="HAMAP" id="MF_01151">
    <property type="entry name" value="GrpE"/>
    <property type="match status" value="1"/>
</dbReference>
<dbReference type="InterPro" id="IPR000740">
    <property type="entry name" value="GrpE"/>
</dbReference>
<dbReference type="InterPro" id="IPR013805">
    <property type="entry name" value="GrpE_coiled_coil"/>
</dbReference>
<dbReference type="InterPro" id="IPR009012">
    <property type="entry name" value="GrpE_head"/>
</dbReference>
<dbReference type="NCBIfam" id="NF010737">
    <property type="entry name" value="PRK14139.1"/>
    <property type="match status" value="1"/>
</dbReference>
<dbReference type="NCBIfam" id="NF010738">
    <property type="entry name" value="PRK14140.1"/>
    <property type="match status" value="1"/>
</dbReference>
<dbReference type="NCBIfam" id="NF010748">
    <property type="entry name" value="PRK14150.1"/>
    <property type="match status" value="1"/>
</dbReference>
<dbReference type="PANTHER" id="PTHR21237">
    <property type="entry name" value="GRPE PROTEIN"/>
    <property type="match status" value="1"/>
</dbReference>
<dbReference type="PANTHER" id="PTHR21237:SF23">
    <property type="entry name" value="GRPE PROTEIN HOMOLOG, MITOCHONDRIAL"/>
    <property type="match status" value="1"/>
</dbReference>
<dbReference type="Pfam" id="PF01025">
    <property type="entry name" value="GrpE"/>
    <property type="match status" value="1"/>
</dbReference>
<dbReference type="PRINTS" id="PR00773">
    <property type="entry name" value="GRPEPROTEIN"/>
</dbReference>
<dbReference type="SUPFAM" id="SSF58014">
    <property type="entry name" value="Coiled-coil domain of nucleotide exchange factor GrpE"/>
    <property type="match status" value="1"/>
</dbReference>
<dbReference type="SUPFAM" id="SSF51064">
    <property type="entry name" value="Head domain of nucleotide exchange factor GrpE"/>
    <property type="match status" value="1"/>
</dbReference>
<dbReference type="PROSITE" id="PS01071">
    <property type="entry name" value="GRPE"/>
    <property type="match status" value="1"/>
</dbReference>
<accession>A9AGC0</accession>
<gene>
    <name evidence="1" type="primary">grpE</name>
    <name type="ordered locus">Bmul_2635</name>
    <name type="ordered locus">BMULJ_00603</name>
</gene>
<name>GRPE_BURM1</name>
<sequence>MENTQENPASQSAEENGSETQAAQDAAPAAEAADAALAEAQAKVAELQESYLRAKAETENVRRRAQEDVAKAHKFAIESFAEHLLPVLDSLEAAVGDTSGDIAKVREGVELTLRQLTSALEKGRVVAINPVGEKFDPHRHQAISMVPADQEPNTVVTVLQKGYTIADRVLRPALVTVAQPK</sequence>
<comment type="function">
    <text evidence="1">Participates actively in the response to hyperosmotic and heat shock by preventing the aggregation of stress-denatured proteins, in association with DnaK and GrpE. It is the nucleotide exchange factor for DnaK and may function as a thermosensor. Unfolded proteins bind initially to DnaJ; upon interaction with the DnaJ-bound protein, DnaK hydrolyzes its bound ATP, resulting in the formation of a stable complex. GrpE releases ADP from DnaK; ATP binding to DnaK triggers the release of the substrate protein, thus completing the reaction cycle. Several rounds of ATP-dependent interactions between DnaJ, DnaK and GrpE are required for fully efficient folding.</text>
</comment>
<comment type="subunit">
    <text evidence="1">Homodimer.</text>
</comment>
<comment type="subcellular location">
    <subcellularLocation>
        <location evidence="1">Cytoplasm</location>
    </subcellularLocation>
</comment>
<comment type="similarity">
    <text evidence="1">Belongs to the GrpE family.</text>
</comment>